<comment type="function">
    <text evidence="1">Catalyzes the conversion of butyryl-CoA through butyryl phosphate to butyrate.</text>
</comment>
<comment type="catalytic activity">
    <reaction evidence="2">
        <text>butanoate + ATP = butanoyl phosphate + ADP</text>
        <dbReference type="Rhea" id="RHEA:13585"/>
        <dbReference type="ChEBI" id="CHEBI:17968"/>
        <dbReference type="ChEBI" id="CHEBI:30616"/>
        <dbReference type="ChEBI" id="CHEBI:58079"/>
        <dbReference type="ChEBI" id="CHEBI:456216"/>
        <dbReference type="EC" id="2.7.2.7"/>
    </reaction>
</comment>
<comment type="pathway">
    <text>Lipid metabolism; butanoate metabolism.</text>
</comment>
<comment type="subcellular location">
    <subcellularLocation>
        <location evidence="2">Cytoplasm</location>
    </subcellularLocation>
</comment>
<comment type="similarity">
    <text evidence="2">Belongs to the acetokinase family.</text>
</comment>
<feature type="chain" id="PRO_0000107662" description="Butyrate kinase">
    <location>
        <begin position="1"/>
        <end position="356"/>
    </location>
</feature>
<evidence type="ECO:0000250" key="1"/>
<evidence type="ECO:0000255" key="2">
    <source>
        <dbReference type="HAMAP-Rule" id="MF_00542"/>
    </source>
</evidence>
<gene>
    <name evidence="2" type="primary">buk</name>
    <name type="ordered locus">CTC_02545</name>
</gene>
<protein>
    <recommendedName>
        <fullName>Butyrate kinase</fullName>
        <shortName evidence="2">BK</shortName>
        <ecNumber evidence="2">2.7.2.7</ecNumber>
    </recommendedName>
</protein>
<organism>
    <name type="scientific">Clostridium tetani (strain Massachusetts / E88)</name>
    <dbReference type="NCBI Taxonomy" id="212717"/>
    <lineage>
        <taxon>Bacteria</taxon>
        <taxon>Bacillati</taxon>
        <taxon>Bacillota</taxon>
        <taxon>Clostridia</taxon>
        <taxon>Eubacteriales</taxon>
        <taxon>Clostridiaceae</taxon>
        <taxon>Clostridium</taxon>
    </lineage>
</organism>
<proteinExistence type="inferred from homology"/>
<name>BUK_CLOTE</name>
<keyword id="KW-0067">ATP-binding</keyword>
<keyword id="KW-0963">Cytoplasm</keyword>
<keyword id="KW-0418">Kinase</keyword>
<keyword id="KW-0547">Nucleotide-binding</keyword>
<keyword id="KW-1185">Reference proteome</keyword>
<keyword id="KW-0808">Transferase</keyword>
<accession>Q890U0</accession>
<dbReference type="EC" id="2.7.2.7" evidence="2"/>
<dbReference type="EMBL" id="AE015927">
    <property type="protein sequence ID" value="AAO37005.1"/>
    <property type="molecule type" value="Genomic_DNA"/>
</dbReference>
<dbReference type="RefSeq" id="WP_011100666.1">
    <property type="nucleotide sequence ID" value="NC_004557.1"/>
</dbReference>
<dbReference type="SMR" id="Q890U0"/>
<dbReference type="STRING" id="212717.CTC_02545"/>
<dbReference type="GeneID" id="24253728"/>
<dbReference type="KEGG" id="ctc:CTC_02545"/>
<dbReference type="HOGENOM" id="CLU_048716_0_0_9"/>
<dbReference type="OrthoDB" id="9771859at2"/>
<dbReference type="UniPathway" id="UPA00863"/>
<dbReference type="Proteomes" id="UP000001412">
    <property type="component" value="Chromosome"/>
</dbReference>
<dbReference type="GO" id="GO:0005737">
    <property type="term" value="C:cytoplasm"/>
    <property type="evidence" value="ECO:0007669"/>
    <property type="project" value="UniProtKB-SubCell"/>
</dbReference>
<dbReference type="GO" id="GO:0008776">
    <property type="term" value="F:acetate kinase activity"/>
    <property type="evidence" value="ECO:0007669"/>
    <property type="project" value="TreeGrafter"/>
</dbReference>
<dbReference type="GO" id="GO:0005524">
    <property type="term" value="F:ATP binding"/>
    <property type="evidence" value="ECO:0007669"/>
    <property type="project" value="UniProtKB-KW"/>
</dbReference>
<dbReference type="GO" id="GO:0047761">
    <property type="term" value="F:butyrate kinase activity"/>
    <property type="evidence" value="ECO:0007669"/>
    <property type="project" value="UniProtKB-UniRule"/>
</dbReference>
<dbReference type="GO" id="GO:0006083">
    <property type="term" value="P:acetate metabolic process"/>
    <property type="evidence" value="ECO:0007669"/>
    <property type="project" value="TreeGrafter"/>
</dbReference>
<dbReference type="GO" id="GO:0019605">
    <property type="term" value="P:butyrate metabolic process"/>
    <property type="evidence" value="ECO:0007669"/>
    <property type="project" value="UniProtKB-UniPathway"/>
</dbReference>
<dbReference type="CDD" id="cd24011">
    <property type="entry name" value="ASKHA_NBD_BK"/>
    <property type="match status" value="1"/>
</dbReference>
<dbReference type="Gene3D" id="3.30.420.40">
    <property type="match status" value="2"/>
</dbReference>
<dbReference type="HAMAP" id="MF_00542">
    <property type="entry name" value="Butyrate_kinase"/>
    <property type="match status" value="1"/>
</dbReference>
<dbReference type="InterPro" id="IPR000890">
    <property type="entry name" value="Aliphatic_acid_kin_short-chain"/>
</dbReference>
<dbReference type="InterPro" id="IPR023865">
    <property type="entry name" value="Aliphatic_acid_kinase_CS"/>
</dbReference>
<dbReference type="InterPro" id="IPR043129">
    <property type="entry name" value="ATPase_NBD"/>
</dbReference>
<dbReference type="InterPro" id="IPR011245">
    <property type="entry name" value="Butyrate_kin"/>
</dbReference>
<dbReference type="NCBIfam" id="TIGR02707">
    <property type="entry name" value="butyr_kinase"/>
    <property type="match status" value="1"/>
</dbReference>
<dbReference type="NCBIfam" id="NF002834">
    <property type="entry name" value="PRK03011.1-5"/>
    <property type="match status" value="1"/>
</dbReference>
<dbReference type="PANTHER" id="PTHR21060">
    <property type="entry name" value="ACETATE KINASE"/>
    <property type="match status" value="1"/>
</dbReference>
<dbReference type="PANTHER" id="PTHR21060:SF3">
    <property type="entry name" value="BUTYRATE KINASE 2-RELATED"/>
    <property type="match status" value="1"/>
</dbReference>
<dbReference type="Pfam" id="PF00871">
    <property type="entry name" value="Acetate_kinase"/>
    <property type="match status" value="1"/>
</dbReference>
<dbReference type="PIRSF" id="PIRSF036458">
    <property type="entry name" value="Butyrate_kin"/>
    <property type="match status" value="1"/>
</dbReference>
<dbReference type="PRINTS" id="PR00471">
    <property type="entry name" value="ACETATEKNASE"/>
</dbReference>
<dbReference type="SUPFAM" id="SSF53067">
    <property type="entry name" value="Actin-like ATPase domain"/>
    <property type="match status" value="2"/>
</dbReference>
<dbReference type="PROSITE" id="PS01075">
    <property type="entry name" value="ACETATE_KINASE_1"/>
    <property type="match status" value="1"/>
</dbReference>
<dbReference type="PROSITE" id="PS01076">
    <property type="entry name" value="ACETATE_KINASE_2"/>
    <property type="match status" value="1"/>
</dbReference>
<sequence length="356" mass="38901">MAHKLLIINPGSTSTKIGVFEDENLIFEETLRHSAEEIGKYSNVYEQFPFRKEVILNVLKEKGFDINTLDAIVGRGGLLKPVEGGTYEVNDAMLKDLRESVRGEHASNLGGIIGNEIAKSLNIPAFIVDPVVVDELQDIARISGMPEIERTSIFHALNQKAVARRYAKENNKSYEDVNIVVVHMGGGSSVGAHKNGKIIDVNNALDGEGPFSPERSGGVPIGDLVRLCYSGKYTLDEIIKKINGKGGAVAYLGTNDFREVEEKALAGDEKYKLILDAFIYQISKEIGKCSVVLEGNVDAIVLTGGIAYSKYVTKEIENKVKFIAPVVLYPGEDELLALTQGGLRVLNGEEKAKEYK</sequence>
<reference key="1">
    <citation type="journal article" date="2003" name="Proc. Natl. Acad. Sci. U.S.A.">
        <title>The genome sequence of Clostridium tetani, the causative agent of tetanus disease.</title>
        <authorList>
            <person name="Brueggemann H."/>
            <person name="Baeumer S."/>
            <person name="Fricke W.F."/>
            <person name="Wiezer A."/>
            <person name="Liesegang H."/>
            <person name="Decker I."/>
            <person name="Herzberg C."/>
            <person name="Martinez-Arias R."/>
            <person name="Merkl R."/>
            <person name="Henne A."/>
            <person name="Gottschalk G."/>
        </authorList>
    </citation>
    <scope>NUCLEOTIDE SEQUENCE [LARGE SCALE GENOMIC DNA]</scope>
    <source>
        <strain>Massachusetts / E88</strain>
    </source>
</reference>